<reference key="1">
    <citation type="submission" date="2006-12" db="EMBL/GenBank/DDBJ databases">
        <title>Complete sequence of Shewanella amazonensis SB2B.</title>
        <authorList>
            <consortium name="US DOE Joint Genome Institute"/>
            <person name="Copeland A."/>
            <person name="Lucas S."/>
            <person name="Lapidus A."/>
            <person name="Barry K."/>
            <person name="Detter J.C."/>
            <person name="Glavina del Rio T."/>
            <person name="Hammon N."/>
            <person name="Israni S."/>
            <person name="Dalin E."/>
            <person name="Tice H."/>
            <person name="Pitluck S."/>
            <person name="Munk A.C."/>
            <person name="Brettin T."/>
            <person name="Bruce D."/>
            <person name="Han C."/>
            <person name="Tapia R."/>
            <person name="Gilna P."/>
            <person name="Schmutz J."/>
            <person name="Larimer F."/>
            <person name="Land M."/>
            <person name="Hauser L."/>
            <person name="Kyrpides N."/>
            <person name="Mikhailova N."/>
            <person name="Fredrickson J."/>
            <person name="Richardson P."/>
        </authorList>
    </citation>
    <scope>NUCLEOTIDE SEQUENCE [LARGE SCALE GENOMIC DNA]</scope>
    <source>
        <strain>ATCC BAA-1098 / SB2B</strain>
    </source>
</reference>
<gene>
    <name evidence="1" type="primary">rlmL</name>
    <name type="ordered locus">Sama_1600</name>
</gene>
<name>RLMKL_SHEAM</name>
<proteinExistence type="inferred from homology"/>
<organism>
    <name type="scientific">Shewanella amazonensis (strain ATCC BAA-1098 / SB2B)</name>
    <dbReference type="NCBI Taxonomy" id="326297"/>
    <lineage>
        <taxon>Bacteria</taxon>
        <taxon>Pseudomonadati</taxon>
        <taxon>Pseudomonadota</taxon>
        <taxon>Gammaproteobacteria</taxon>
        <taxon>Alteromonadales</taxon>
        <taxon>Shewanellaceae</taxon>
        <taxon>Shewanella</taxon>
    </lineage>
</organism>
<dbReference type="EC" id="2.1.1.173" evidence="1"/>
<dbReference type="EC" id="2.1.1.264" evidence="1"/>
<dbReference type="EMBL" id="CP000507">
    <property type="protein sequence ID" value="ABL99807.1"/>
    <property type="molecule type" value="Genomic_DNA"/>
</dbReference>
<dbReference type="RefSeq" id="WP_011759715.1">
    <property type="nucleotide sequence ID" value="NC_008700.1"/>
</dbReference>
<dbReference type="SMR" id="A1S601"/>
<dbReference type="STRING" id="326297.Sama_1600"/>
<dbReference type="KEGG" id="saz:Sama_1600"/>
<dbReference type="eggNOG" id="COG0116">
    <property type="taxonomic scope" value="Bacteria"/>
</dbReference>
<dbReference type="eggNOG" id="COG1092">
    <property type="taxonomic scope" value="Bacteria"/>
</dbReference>
<dbReference type="HOGENOM" id="CLU_014042_2_0_6"/>
<dbReference type="OrthoDB" id="9809404at2"/>
<dbReference type="Proteomes" id="UP000009175">
    <property type="component" value="Chromosome"/>
</dbReference>
<dbReference type="GO" id="GO:0005737">
    <property type="term" value="C:cytoplasm"/>
    <property type="evidence" value="ECO:0007669"/>
    <property type="project" value="UniProtKB-SubCell"/>
</dbReference>
<dbReference type="GO" id="GO:0052915">
    <property type="term" value="F:23S rRNA (guanine(2445)-N(2))-methyltransferase activity"/>
    <property type="evidence" value="ECO:0007669"/>
    <property type="project" value="UniProtKB-UniRule"/>
</dbReference>
<dbReference type="GO" id="GO:0003723">
    <property type="term" value="F:RNA binding"/>
    <property type="evidence" value="ECO:0007669"/>
    <property type="project" value="UniProtKB-KW"/>
</dbReference>
<dbReference type="GO" id="GO:0070043">
    <property type="term" value="F:rRNA (guanine-N7-)-methyltransferase activity"/>
    <property type="evidence" value="ECO:0007669"/>
    <property type="project" value="UniProtKB-UniRule"/>
</dbReference>
<dbReference type="CDD" id="cd02440">
    <property type="entry name" value="AdoMet_MTases"/>
    <property type="match status" value="1"/>
</dbReference>
<dbReference type="CDD" id="cd11715">
    <property type="entry name" value="THUMP_AdoMetMT"/>
    <property type="match status" value="1"/>
</dbReference>
<dbReference type="FunFam" id="3.40.50.150:FF:000039">
    <property type="entry name" value="Ribosomal RNA large subunit methyltransferase K/L"/>
    <property type="match status" value="1"/>
</dbReference>
<dbReference type="Gene3D" id="3.30.2130.30">
    <property type="match status" value="1"/>
</dbReference>
<dbReference type="Gene3D" id="3.30.750.80">
    <property type="entry name" value="RNA methyltransferase domain (HRMD) like"/>
    <property type="match status" value="1"/>
</dbReference>
<dbReference type="Gene3D" id="3.40.50.150">
    <property type="entry name" value="Vaccinia Virus protein VP39"/>
    <property type="match status" value="2"/>
</dbReference>
<dbReference type="HAMAP" id="MF_01858">
    <property type="entry name" value="23SrRNA_methyltr_KL"/>
    <property type="match status" value="1"/>
</dbReference>
<dbReference type="InterPro" id="IPR017244">
    <property type="entry name" value="23SrRNA_methyltr_KL"/>
</dbReference>
<dbReference type="InterPro" id="IPR002052">
    <property type="entry name" value="DNA_methylase_N6_adenine_CS"/>
</dbReference>
<dbReference type="InterPro" id="IPR000241">
    <property type="entry name" value="RlmKL-like_Mtase"/>
</dbReference>
<dbReference type="InterPro" id="IPR053943">
    <property type="entry name" value="RlmKL-like_Mtase_CS"/>
</dbReference>
<dbReference type="InterPro" id="IPR054170">
    <property type="entry name" value="RlmL_1st"/>
</dbReference>
<dbReference type="InterPro" id="IPR019614">
    <property type="entry name" value="SAM-dep_methyl-trfase"/>
</dbReference>
<dbReference type="InterPro" id="IPR029063">
    <property type="entry name" value="SAM-dependent_MTases_sf"/>
</dbReference>
<dbReference type="InterPro" id="IPR004114">
    <property type="entry name" value="THUMP_dom"/>
</dbReference>
<dbReference type="NCBIfam" id="NF008748">
    <property type="entry name" value="PRK11783.1"/>
    <property type="match status" value="1"/>
</dbReference>
<dbReference type="PANTHER" id="PTHR47313">
    <property type="entry name" value="RIBOSOMAL RNA LARGE SUBUNIT METHYLTRANSFERASE K/L"/>
    <property type="match status" value="1"/>
</dbReference>
<dbReference type="PANTHER" id="PTHR47313:SF1">
    <property type="entry name" value="RIBOSOMAL RNA LARGE SUBUNIT METHYLTRANSFERASE K_L"/>
    <property type="match status" value="1"/>
</dbReference>
<dbReference type="Pfam" id="PF10672">
    <property type="entry name" value="Methyltrans_SAM"/>
    <property type="match status" value="1"/>
</dbReference>
<dbReference type="Pfam" id="PF22020">
    <property type="entry name" value="RlmL_1st"/>
    <property type="match status" value="1"/>
</dbReference>
<dbReference type="Pfam" id="PF02926">
    <property type="entry name" value="THUMP"/>
    <property type="match status" value="1"/>
</dbReference>
<dbReference type="Pfam" id="PF01170">
    <property type="entry name" value="UPF0020"/>
    <property type="match status" value="1"/>
</dbReference>
<dbReference type="PIRSF" id="PIRSF037618">
    <property type="entry name" value="RNA_Mtase_bacteria_prd"/>
    <property type="match status" value="1"/>
</dbReference>
<dbReference type="SMART" id="SM00981">
    <property type="entry name" value="THUMP"/>
    <property type="match status" value="1"/>
</dbReference>
<dbReference type="SUPFAM" id="SSF53335">
    <property type="entry name" value="S-adenosyl-L-methionine-dependent methyltransferases"/>
    <property type="match status" value="2"/>
</dbReference>
<dbReference type="PROSITE" id="PS51165">
    <property type="entry name" value="THUMP"/>
    <property type="match status" value="1"/>
</dbReference>
<dbReference type="PROSITE" id="PS01261">
    <property type="entry name" value="UPF0020"/>
    <property type="match status" value="1"/>
</dbReference>
<protein>
    <recommendedName>
        <fullName evidence="1">Ribosomal RNA large subunit methyltransferase K/L</fullName>
    </recommendedName>
    <domain>
        <recommendedName>
            <fullName evidence="1">23S rRNA m2G2445 methyltransferase</fullName>
            <ecNumber evidence="1">2.1.1.173</ecNumber>
        </recommendedName>
        <alternativeName>
            <fullName evidence="1">rRNA (guanine-N(2)-)-methyltransferase RlmL</fullName>
        </alternativeName>
    </domain>
    <domain>
        <recommendedName>
            <fullName evidence="1">23S rRNA m7G2069 methyltransferase</fullName>
            <ecNumber evidence="1">2.1.1.264</ecNumber>
        </recommendedName>
        <alternativeName>
            <fullName evidence="1">rRNA (guanine-N(7)-)-methyltransferase RlmK</fullName>
        </alternativeName>
    </domain>
</protein>
<comment type="function">
    <text evidence="1">Specifically methylates the guanine in position 2445 (m2G2445) and the guanine in position 2069 (m7G2069) of 23S rRNA.</text>
</comment>
<comment type="catalytic activity">
    <reaction evidence="1">
        <text>guanosine(2445) in 23S rRNA + S-adenosyl-L-methionine = N(2)-methylguanosine(2445) in 23S rRNA + S-adenosyl-L-homocysteine + H(+)</text>
        <dbReference type="Rhea" id="RHEA:42740"/>
        <dbReference type="Rhea" id="RHEA-COMP:10215"/>
        <dbReference type="Rhea" id="RHEA-COMP:10216"/>
        <dbReference type="ChEBI" id="CHEBI:15378"/>
        <dbReference type="ChEBI" id="CHEBI:57856"/>
        <dbReference type="ChEBI" id="CHEBI:59789"/>
        <dbReference type="ChEBI" id="CHEBI:74269"/>
        <dbReference type="ChEBI" id="CHEBI:74481"/>
        <dbReference type="EC" id="2.1.1.173"/>
    </reaction>
</comment>
<comment type="catalytic activity">
    <reaction evidence="1">
        <text>guanosine(2069) in 23S rRNA + S-adenosyl-L-methionine = N(2)-methylguanosine(2069) in 23S rRNA + S-adenosyl-L-homocysteine + H(+)</text>
        <dbReference type="Rhea" id="RHEA:43772"/>
        <dbReference type="Rhea" id="RHEA-COMP:10688"/>
        <dbReference type="Rhea" id="RHEA-COMP:10689"/>
        <dbReference type="ChEBI" id="CHEBI:15378"/>
        <dbReference type="ChEBI" id="CHEBI:57856"/>
        <dbReference type="ChEBI" id="CHEBI:59789"/>
        <dbReference type="ChEBI" id="CHEBI:74269"/>
        <dbReference type="ChEBI" id="CHEBI:74481"/>
        <dbReference type="EC" id="2.1.1.264"/>
    </reaction>
</comment>
<comment type="subcellular location">
    <subcellularLocation>
        <location evidence="1">Cytoplasm</location>
    </subcellularLocation>
</comment>
<comment type="similarity">
    <text evidence="1">Belongs to the methyltransferase superfamily. RlmKL family.</text>
</comment>
<feature type="chain" id="PRO_0000366819" description="Ribosomal RNA large subunit methyltransferase K/L">
    <location>
        <begin position="1"/>
        <end position="708"/>
    </location>
</feature>
<feature type="domain" description="THUMP" evidence="1">
    <location>
        <begin position="43"/>
        <end position="154"/>
    </location>
</feature>
<accession>A1S601</accession>
<sequence length="708" mass="79420">MFNFFAAAPKGFEYALAKELETLGAENVRESVAGVYFSASLAQGYQITLWTRLASRIVLILFTGECQSAEQLYNAAYTIDWPSHFSNRSTFSIDFHGTGGFINNSQFGALKIKDAVVDRFRDDDLSRPDVVKGHPDMRIDAHYGRGKITIGINFSGAALHQRGYRGNTGEAPLKENLAANMLYRSGWADNPVTLLDPFCGSGTVLIEAALMACDIAPGLMRERFGFEHWRRHDQALWQQVIEEAKARASLGKTRCQLKFYGSDIDSRVVALAKRNANSAGVFDFIDFKVANALNLEPPVAEGMVLTNPPYGERLGNVTSLLQLYFQLGEKFKQSYGGWKLGLLCSDMELVSSLKLKADKQMKMYNGALECAFNLYTLHATSTRRDIPVDTTGQGGEIAAPFANRLKKNLKQLEKWAKREGIDSYRLYDADIPEYNVAVDRYLDYVVVQEYAAPSAIPEAVTKRRLTDVLLALPRALGIDPDKIVLKTRERQKGTNQYQKLDGEKLELVTTEYGCSFKLNLTDYLDTGLFLDHRLTRKLVGEKAKNRDVLNLFAYTGSASVHAGKGGAKSVTTVDMSNTYLNWAKDNFMLNGLIGRQYQFEQADCLQWIRDCERQFDLIFIDPPTFSNSKRMEDSFDVQRDHVDLLASLKKLLRPGGEIVFSNNKRKFKMDMEALAAAGLKAVNIDDKVLPMDYARNPQIHNCWVVTHG</sequence>
<keyword id="KW-0963">Cytoplasm</keyword>
<keyword id="KW-0489">Methyltransferase</keyword>
<keyword id="KW-1185">Reference proteome</keyword>
<keyword id="KW-0694">RNA-binding</keyword>
<keyword id="KW-0698">rRNA processing</keyword>
<keyword id="KW-0949">S-adenosyl-L-methionine</keyword>
<keyword id="KW-0808">Transferase</keyword>
<evidence type="ECO:0000255" key="1">
    <source>
        <dbReference type="HAMAP-Rule" id="MF_01858"/>
    </source>
</evidence>